<comment type="function">
    <text evidence="1">F(1)F(0) ATP synthase produces ATP from ADP in the presence of a proton or sodium gradient. F-type ATPases consist of two structural domains, F(1) containing the extramembraneous catalytic core and F(0) containing the membrane proton channel, linked together by a central stalk and a peripheral stalk. During catalysis, ATP synthesis in the catalytic domain of F(1) is coupled via a rotary mechanism of the central stalk subunits to proton translocation.</text>
</comment>
<comment type="function">
    <text evidence="1">Key component of the F(0) channel; it plays a direct role in translocation across the membrane. A homomeric c-ring of between 10-14 subunits forms the central stalk rotor element with the F(1) delta and epsilon subunits.</text>
</comment>
<comment type="subunit">
    <text evidence="1">F-type ATPases have 2 components, F(1) - the catalytic core - and F(0) - the membrane proton channel. F(1) has five subunits: alpha(3), beta(3), gamma(1), delta(1), epsilon(1). F(0) has three main subunits: a(1), b(2) and c(10-14). The alpha and beta chains form an alternating ring which encloses part of the gamma chain. F(1) is attached to F(0) by a central stalk formed by the gamma and epsilon chains, while a peripheral stalk is formed by the delta and b chains.</text>
</comment>
<comment type="subcellular location">
    <subcellularLocation>
        <location evidence="1">Cell inner membrane</location>
        <topology evidence="1">Multi-pass membrane protein</topology>
    </subcellularLocation>
</comment>
<comment type="similarity">
    <text evidence="1">Belongs to the ATPase C chain family.</text>
</comment>
<organism>
    <name type="scientific">Shewanella baltica (strain OS185)</name>
    <dbReference type="NCBI Taxonomy" id="402882"/>
    <lineage>
        <taxon>Bacteria</taxon>
        <taxon>Pseudomonadati</taxon>
        <taxon>Pseudomonadota</taxon>
        <taxon>Gammaproteobacteria</taxon>
        <taxon>Alteromonadales</taxon>
        <taxon>Shewanellaceae</taxon>
        <taxon>Shewanella</taxon>
    </lineage>
</organism>
<sequence>METILGMTAIAVALLIGMGALGTAIGFGLLGGKFLEGAARQPEMAPMLQVKMFIVAGLLDAVTMIGVGIALFMLFTNPLGAML</sequence>
<keyword id="KW-0066">ATP synthesis</keyword>
<keyword id="KW-0997">Cell inner membrane</keyword>
<keyword id="KW-1003">Cell membrane</keyword>
<keyword id="KW-0138">CF(0)</keyword>
<keyword id="KW-0375">Hydrogen ion transport</keyword>
<keyword id="KW-0406">Ion transport</keyword>
<keyword id="KW-0446">Lipid-binding</keyword>
<keyword id="KW-0472">Membrane</keyword>
<keyword id="KW-0812">Transmembrane</keyword>
<keyword id="KW-1133">Transmembrane helix</keyword>
<keyword id="KW-0813">Transport</keyword>
<reference key="1">
    <citation type="submission" date="2007-07" db="EMBL/GenBank/DDBJ databases">
        <title>Complete sequence of chromosome of Shewanella baltica OS185.</title>
        <authorList>
            <consortium name="US DOE Joint Genome Institute"/>
            <person name="Copeland A."/>
            <person name="Lucas S."/>
            <person name="Lapidus A."/>
            <person name="Barry K."/>
            <person name="Glavina del Rio T."/>
            <person name="Dalin E."/>
            <person name="Tice H."/>
            <person name="Pitluck S."/>
            <person name="Sims D."/>
            <person name="Brettin T."/>
            <person name="Bruce D."/>
            <person name="Detter J.C."/>
            <person name="Han C."/>
            <person name="Schmutz J."/>
            <person name="Larimer F."/>
            <person name="Land M."/>
            <person name="Hauser L."/>
            <person name="Kyrpides N."/>
            <person name="Mikhailova N."/>
            <person name="Brettar I."/>
            <person name="Rodrigues J."/>
            <person name="Konstantinidis K."/>
            <person name="Tiedje J."/>
            <person name="Richardson P."/>
        </authorList>
    </citation>
    <scope>NUCLEOTIDE SEQUENCE [LARGE SCALE GENOMIC DNA]</scope>
    <source>
        <strain>OS185</strain>
    </source>
</reference>
<accession>A6WUJ5</accession>
<feature type="chain" id="PRO_1000184470" description="ATP synthase subunit c">
    <location>
        <begin position="1"/>
        <end position="83"/>
    </location>
</feature>
<feature type="transmembrane region" description="Helical" evidence="1">
    <location>
        <begin position="10"/>
        <end position="30"/>
    </location>
</feature>
<feature type="transmembrane region" description="Helical" evidence="1">
    <location>
        <begin position="52"/>
        <end position="72"/>
    </location>
</feature>
<feature type="site" description="Reversibly protonated during proton transport" evidence="1">
    <location>
        <position position="60"/>
    </location>
</feature>
<proteinExistence type="inferred from homology"/>
<gene>
    <name evidence="1" type="primary">atpE</name>
    <name type="ordered locus">Shew185_4370</name>
</gene>
<dbReference type="EMBL" id="CP000753">
    <property type="protein sequence ID" value="ABS10484.1"/>
    <property type="molecule type" value="Genomic_DNA"/>
</dbReference>
<dbReference type="RefSeq" id="WP_006083840.1">
    <property type="nucleotide sequence ID" value="NC_009665.1"/>
</dbReference>
<dbReference type="SMR" id="A6WUJ5"/>
<dbReference type="GeneID" id="94725963"/>
<dbReference type="KEGG" id="sbm:Shew185_4370"/>
<dbReference type="HOGENOM" id="CLU_148047_1_0_6"/>
<dbReference type="GO" id="GO:0005886">
    <property type="term" value="C:plasma membrane"/>
    <property type="evidence" value="ECO:0007669"/>
    <property type="project" value="UniProtKB-SubCell"/>
</dbReference>
<dbReference type="GO" id="GO:0045259">
    <property type="term" value="C:proton-transporting ATP synthase complex"/>
    <property type="evidence" value="ECO:0007669"/>
    <property type="project" value="UniProtKB-KW"/>
</dbReference>
<dbReference type="GO" id="GO:0033177">
    <property type="term" value="C:proton-transporting two-sector ATPase complex, proton-transporting domain"/>
    <property type="evidence" value="ECO:0007669"/>
    <property type="project" value="InterPro"/>
</dbReference>
<dbReference type="GO" id="GO:0008289">
    <property type="term" value="F:lipid binding"/>
    <property type="evidence" value="ECO:0007669"/>
    <property type="project" value="UniProtKB-KW"/>
</dbReference>
<dbReference type="GO" id="GO:0046933">
    <property type="term" value="F:proton-transporting ATP synthase activity, rotational mechanism"/>
    <property type="evidence" value="ECO:0007669"/>
    <property type="project" value="UniProtKB-UniRule"/>
</dbReference>
<dbReference type="CDD" id="cd18185">
    <property type="entry name" value="ATP-synt_Fo_c_ATPE"/>
    <property type="match status" value="1"/>
</dbReference>
<dbReference type="FunFam" id="1.20.20.10:FF:000002">
    <property type="entry name" value="ATP synthase subunit c"/>
    <property type="match status" value="1"/>
</dbReference>
<dbReference type="Gene3D" id="1.20.20.10">
    <property type="entry name" value="F1F0 ATP synthase subunit C"/>
    <property type="match status" value="1"/>
</dbReference>
<dbReference type="HAMAP" id="MF_01396">
    <property type="entry name" value="ATP_synth_c_bact"/>
    <property type="match status" value="1"/>
</dbReference>
<dbReference type="InterPro" id="IPR005953">
    <property type="entry name" value="ATP_synth_csu_bac/chlpt"/>
</dbReference>
<dbReference type="InterPro" id="IPR000454">
    <property type="entry name" value="ATP_synth_F0_csu"/>
</dbReference>
<dbReference type="InterPro" id="IPR020537">
    <property type="entry name" value="ATP_synth_F0_csu_DDCD_BS"/>
</dbReference>
<dbReference type="InterPro" id="IPR038662">
    <property type="entry name" value="ATP_synth_F0_csu_sf"/>
</dbReference>
<dbReference type="InterPro" id="IPR002379">
    <property type="entry name" value="ATPase_proteolipid_c-like_dom"/>
</dbReference>
<dbReference type="InterPro" id="IPR035921">
    <property type="entry name" value="F/V-ATP_Csub_sf"/>
</dbReference>
<dbReference type="NCBIfam" id="TIGR01260">
    <property type="entry name" value="ATP_synt_c"/>
    <property type="match status" value="1"/>
</dbReference>
<dbReference type="NCBIfam" id="NF005363">
    <property type="entry name" value="PRK06876.1"/>
    <property type="match status" value="1"/>
</dbReference>
<dbReference type="Pfam" id="PF00137">
    <property type="entry name" value="ATP-synt_C"/>
    <property type="match status" value="1"/>
</dbReference>
<dbReference type="PRINTS" id="PR00124">
    <property type="entry name" value="ATPASEC"/>
</dbReference>
<dbReference type="SUPFAM" id="SSF81333">
    <property type="entry name" value="F1F0 ATP synthase subunit C"/>
    <property type="match status" value="1"/>
</dbReference>
<dbReference type="PROSITE" id="PS00605">
    <property type="entry name" value="ATPASE_C"/>
    <property type="match status" value="1"/>
</dbReference>
<protein>
    <recommendedName>
        <fullName evidence="1">ATP synthase subunit c</fullName>
    </recommendedName>
    <alternativeName>
        <fullName evidence="1">ATP synthase F(0) sector subunit c</fullName>
    </alternativeName>
    <alternativeName>
        <fullName evidence="1">F-type ATPase subunit c</fullName>
        <shortName evidence="1">F-ATPase subunit c</shortName>
    </alternativeName>
    <alternativeName>
        <fullName evidence="1">Lipid-binding protein</fullName>
    </alternativeName>
</protein>
<name>ATPL_SHEB8</name>
<evidence type="ECO:0000255" key="1">
    <source>
        <dbReference type="HAMAP-Rule" id="MF_01396"/>
    </source>
</evidence>